<organism>
    <name type="scientific">Nocardia farcinica (strain IFM 10152)</name>
    <dbReference type="NCBI Taxonomy" id="247156"/>
    <lineage>
        <taxon>Bacteria</taxon>
        <taxon>Bacillati</taxon>
        <taxon>Actinomycetota</taxon>
        <taxon>Actinomycetes</taxon>
        <taxon>Mycobacteriales</taxon>
        <taxon>Nocardiaceae</taxon>
        <taxon>Nocardia</taxon>
    </lineage>
</organism>
<gene>
    <name evidence="1" type="primary">prcB</name>
    <name type="ordered locus">NFA_31720</name>
</gene>
<evidence type="ECO:0000255" key="1">
    <source>
        <dbReference type="HAMAP-Rule" id="MF_02113"/>
    </source>
</evidence>
<feature type="propeptide" id="PRO_0000397558" description="Removed in mature form; by autocatalysis" evidence="1">
    <location>
        <begin position="1"/>
        <end position="57"/>
    </location>
</feature>
<feature type="chain" id="PRO_0000397559" description="Proteasome subunit beta">
    <location>
        <begin position="58"/>
        <end position="288"/>
    </location>
</feature>
<feature type="active site" description="Nucleophile" evidence="1">
    <location>
        <position position="58"/>
    </location>
</feature>
<protein>
    <recommendedName>
        <fullName evidence="1">Proteasome subunit beta</fullName>
        <ecNumber evidence="1">3.4.25.1</ecNumber>
    </recommendedName>
    <alternativeName>
        <fullName evidence="1">20S proteasome beta subunit</fullName>
    </alternativeName>
    <alternativeName>
        <fullName evidence="1">Proteasome core protein PrcB</fullName>
    </alternativeName>
</protein>
<dbReference type="EC" id="3.4.25.1" evidence="1"/>
<dbReference type="EMBL" id="AP006618">
    <property type="protein sequence ID" value="BAD58019.1"/>
    <property type="molecule type" value="Genomic_DNA"/>
</dbReference>
<dbReference type="SMR" id="Q5YUX2"/>
<dbReference type="STRING" id="247156.NFA_31720"/>
<dbReference type="MEROPS" id="T01.005"/>
<dbReference type="KEGG" id="nfa:NFA_31720"/>
<dbReference type="eggNOG" id="COG0638">
    <property type="taxonomic scope" value="Bacteria"/>
</dbReference>
<dbReference type="HOGENOM" id="CLU_035750_2_0_11"/>
<dbReference type="UniPathway" id="UPA00997"/>
<dbReference type="Proteomes" id="UP000006820">
    <property type="component" value="Chromosome"/>
</dbReference>
<dbReference type="GO" id="GO:0005737">
    <property type="term" value="C:cytoplasm"/>
    <property type="evidence" value="ECO:0007669"/>
    <property type="project" value="UniProtKB-SubCell"/>
</dbReference>
<dbReference type="GO" id="GO:0019774">
    <property type="term" value="C:proteasome core complex, beta-subunit complex"/>
    <property type="evidence" value="ECO:0007669"/>
    <property type="project" value="UniProtKB-UniRule"/>
</dbReference>
<dbReference type="GO" id="GO:0004298">
    <property type="term" value="F:threonine-type endopeptidase activity"/>
    <property type="evidence" value="ECO:0007669"/>
    <property type="project" value="UniProtKB-UniRule"/>
</dbReference>
<dbReference type="GO" id="GO:0019941">
    <property type="term" value="P:modification-dependent protein catabolic process"/>
    <property type="evidence" value="ECO:0007669"/>
    <property type="project" value="UniProtKB-UniRule"/>
</dbReference>
<dbReference type="GO" id="GO:0010498">
    <property type="term" value="P:proteasomal protein catabolic process"/>
    <property type="evidence" value="ECO:0007669"/>
    <property type="project" value="UniProtKB-UniRule"/>
</dbReference>
<dbReference type="CDD" id="cd01906">
    <property type="entry name" value="proteasome_protease_HslV"/>
    <property type="match status" value="1"/>
</dbReference>
<dbReference type="Gene3D" id="3.60.20.10">
    <property type="entry name" value="Glutamine Phosphoribosylpyrophosphate, subunit 1, domain 1"/>
    <property type="match status" value="1"/>
</dbReference>
<dbReference type="HAMAP" id="MF_02113_B">
    <property type="entry name" value="Proteasome_B_B"/>
    <property type="match status" value="1"/>
</dbReference>
<dbReference type="InterPro" id="IPR029055">
    <property type="entry name" value="Ntn_hydrolases_N"/>
</dbReference>
<dbReference type="InterPro" id="IPR001353">
    <property type="entry name" value="Proteasome_sua/b"/>
</dbReference>
<dbReference type="InterPro" id="IPR023333">
    <property type="entry name" value="Proteasome_suB-type"/>
</dbReference>
<dbReference type="InterPro" id="IPR022483">
    <property type="entry name" value="PSB_actinobac"/>
</dbReference>
<dbReference type="NCBIfam" id="TIGR03690">
    <property type="entry name" value="20S_bact_beta"/>
    <property type="match status" value="1"/>
</dbReference>
<dbReference type="PANTHER" id="PTHR32194:SF0">
    <property type="entry name" value="ATP-DEPENDENT PROTEASE SUBUNIT HSLV"/>
    <property type="match status" value="1"/>
</dbReference>
<dbReference type="PANTHER" id="PTHR32194">
    <property type="entry name" value="METALLOPROTEASE TLDD"/>
    <property type="match status" value="1"/>
</dbReference>
<dbReference type="Pfam" id="PF00227">
    <property type="entry name" value="Proteasome"/>
    <property type="match status" value="1"/>
</dbReference>
<dbReference type="SUPFAM" id="SSF56235">
    <property type="entry name" value="N-terminal nucleophile aminohydrolases (Ntn hydrolases)"/>
    <property type="match status" value="1"/>
</dbReference>
<dbReference type="PROSITE" id="PS51476">
    <property type="entry name" value="PROTEASOME_BETA_2"/>
    <property type="match status" value="1"/>
</dbReference>
<reference key="1">
    <citation type="journal article" date="2004" name="Proc. Natl. Acad. Sci. U.S.A.">
        <title>The complete genomic sequence of Nocardia farcinica IFM 10152.</title>
        <authorList>
            <person name="Ishikawa J."/>
            <person name="Yamashita A."/>
            <person name="Mikami Y."/>
            <person name="Hoshino Y."/>
            <person name="Kurita H."/>
            <person name="Hotta K."/>
            <person name="Shiba T."/>
            <person name="Hattori M."/>
        </authorList>
    </citation>
    <scope>NUCLEOTIDE SEQUENCE [LARGE SCALE GENOMIC DNA]</scope>
    <source>
        <strain>IFM 10152</strain>
    </source>
</reference>
<keyword id="KW-0068">Autocatalytic cleavage</keyword>
<keyword id="KW-0963">Cytoplasm</keyword>
<keyword id="KW-0378">Hydrolase</keyword>
<keyword id="KW-0645">Protease</keyword>
<keyword id="KW-0647">Proteasome</keyword>
<keyword id="KW-1185">Reference proteome</keyword>
<keyword id="KW-0888">Threonine protease</keyword>
<keyword id="KW-0865">Zymogen</keyword>
<proteinExistence type="inferred from homology"/>
<comment type="function">
    <text evidence="1">Component of the proteasome core, a large protease complex with broad specificity involved in protein degradation.</text>
</comment>
<comment type="catalytic activity">
    <reaction evidence="1">
        <text>Cleavage of peptide bonds with very broad specificity.</text>
        <dbReference type="EC" id="3.4.25.1"/>
    </reaction>
</comment>
<comment type="activity regulation">
    <text evidence="1">The formation of the proteasomal ATPase ARC-20S proteasome complex, likely via the docking of the C-termini of ARC into the intersubunit pockets in the alpha-rings, may trigger opening of the gate for substrate entry. Interconversion between the open-gate and close-gate conformations leads to a dynamic regulation of the 20S proteasome proteolysis activity.</text>
</comment>
<comment type="pathway">
    <text evidence="1">Protein degradation; proteasomal Pup-dependent pathway.</text>
</comment>
<comment type="subunit">
    <text evidence="1">The 20S proteasome core is composed of 14 alpha and 14 beta subunits that assemble into four stacked heptameric rings, resulting in a barrel-shaped structure. The two inner rings, each composed of seven catalytic beta subunits, are sandwiched by two outer rings, each composed of seven alpha subunits. The catalytic chamber with the active sites is on the inside of the barrel. Has a gated structure, the ends of the cylinder being occluded by the N-termini of the alpha-subunits. Is capped by the proteasome-associated ATPase, ARC.</text>
</comment>
<comment type="subcellular location">
    <subcellularLocation>
        <location evidence="1">Cytoplasm</location>
    </subcellularLocation>
</comment>
<comment type="similarity">
    <text evidence="1">Belongs to the peptidase T1B family.</text>
</comment>
<accession>Q5YUX2</accession>
<name>PSB_NOCFA</name>
<sequence>MTAGDPMRLHPGHALSSFTEHLRALAPELLGPNRFAALDGATGSSGGTGAKDIAPHGTTIVAVSYRGGVLIAGDRRATQGNLLASRDMDKVYITDTFSAAGIAGTAGMAVELVRLFAVELEHYEKIEGVPLTFDGKANKLSKMVRDNLPAALQGLAVVPVLVGYDERAGDPDRAGRIVSYDVVGGRSEERFGYTAVGSGSMFAKTSLKKLYAKGIDQARALRIALESLYDASDDDTATGGPDLLRGIYPTAVVIDAEGALEVPESRLEEIARGIVADRTAAQEGSAGA</sequence>